<organism>
    <name type="scientific">Escherichia coli O127:H6 (strain E2348/69 / EPEC)</name>
    <dbReference type="NCBI Taxonomy" id="574521"/>
    <lineage>
        <taxon>Bacteria</taxon>
        <taxon>Pseudomonadati</taxon>
        <taxon>Pseudomonadota</taxon>
        <taxon>Gammaproteobacteria</taxon>
        <taxon>Enterobacterales</taxon>
        <taxon>Enterobacteriaceae</taxon>
        <taxon>Escherichia</taxon>
    </lineage>
</organism>
<sequence length="412" mass="44242">MTNYRVESSSGRAARKMRLALMGPAFIAAIGYIDPGNFATNIQAGASFGYQLLWVVVWANLMAMLIQILSAKLGIATGKNLAEQIRDHYPRPFVWFYWVQAEIIAMATDLAEFIGAAIGFKLILGVSLLQGAVLTGIATFLILMLQRRGQKPLEKVIGGLLLFVAAAYIVELIFSQPNLAQLGKGMVIPSLPTSEAVFLAAGVLGATIMPHVIYLHSSLTQHLHGGSRQQRYSATKWDVAIAMTIAGFVNLAMMATAAAAFHFSGHTGVADLDEAYLTLQPLLSHAAATVFGLSLVAAGLSSTVVGTLAGQVVMQGFIRFHIPLWVRRTVTMLPSFIVILMGLDPTRILVMSQVLLSFGIALALVPLLIFTSDSKLMGDLVNSKRVKQTGWVIVVLVVALNIWLLVGTALGL</sequence>
<accession>B7UGA0</accession>
<evidence type="ECO:0000255" key="1">
    <source>
        <dbReference type="HAMAP-Rule" id="MF_00221"/>
    </source>
</evidence>
<protein>
    <recommendedName>
        <fullName evidence="1">Divalent metal cation transporter MntH</fullName>
    </recommendedName>
</protein>
<keyword id="KW-0997">Cell inner membrane</keyword>
<keyword id="KW-1003">Cell membrane</keyword>
<keyword id="KW-0406">Ion transport</keyword>
<keyword id="KW-0472">Membrane</keyword>
<keyword id="KW-1185">Reference proteome</keyword>
<keyword id="KW-0769">Symport</keyword>
<keyword id="KW-0812">Transmembrane</keyword>
<keyword id="KW-1133">Transmembrane helix</keyword>
<keyword id="KW-0813">Transport</keyword>
<reference key="1">
    <citation type="journal article" date="2009" name="J. Bacteriol.">
        <title>Complete genome sequence and comparative genome analysis of enteropathogenic Escherichia coli O127:H6 strain E2348/69.</title>
        <authorList>
            <person name="Iguchi A."/>
            <person name="Thomson N.R."/>
            <person name="Ogura Y."/>
            <person name="Saunders D."/>
            <person name="Ooka T."/>
            <person name="Henderson I.R."/>
            <person name="Harris D."/>
            <person name="Asadulghani M."/>
            <person name="Kurokawa K."/>
            <person name="Dean P."/>
            <person name="Kenny B."/>
            <person name="Quail M.A."/>
            <person name="Thurston S."/>
            <person name="Dougan G."/>
            <person name="Hayashi T."/>
            <person name="Parkhill J."/>
            <person name="Frankel G."/>
        </authorList>
    </citation>
    <scope>NUCLEOTIDE SEQUENCE [LARGE SCALE GENOMIC DNA]</scope>
    <source>
        <strain>E2348/69 / EPEC</strain>
    </source>
</reference>
<proteinExistence type="inferred from homology"/>
<dbReference type="EMBL" id="FM180568">
    <property type="protein sequence ID" value="CAS10132.1"/>
    <property type="molecule type" value="Genomic_DNA"/>
</dbReference>
<dbReference type="RefSeq" id="WP_000186356.1">
    <property type="nucleotide sequence ID" value="NC_011601.1"/>
</dbReference>
<dbReference type="SMR" id="B7UGA0"/>
<dbReference type="KEGG" id="ecg:E2348C_2584"/>
<dbReference type="HOGENOM" id="CLU_020088_2_0_6"/>
<dbReference type="Proteomes" id="UP000008205">
    <property type="component" value="Chromosome"/>
</dbReference>
<dbReference type="GO" id="GO:0005886">
    <property type="term" value="C:plasma membrane"/>
    <property type="evidence" value="ECO:0007669"/>
    <property type="project" value="UniProtKB-SubCell"/>
</dbReference>
<dbReference type="GO" id="GO:0015086">
    <property type="term" value="F:cadmium ion transmembrane transporter activity"/>
    <property type="evidence" value="ECO:0007669"/>
    <property type="project" value="TreeGrafter"/>
</dbReference>
<dbReference type="GO" id="GO:0005384">
    <property type="term" value="F:manganese ion transmembrane transporter activity"/>
    <property type="evidence" value="ECO:0007669"/>
    <property type="project" value="TreeGrafter"/>
</dbReference>
<dbReference type="GO" id="GO:0046872">
    <property type="term" value="F:metal ion binding"/>
    <property type="evidence" value="ECO:0007669"/>
    <property type="project" value="UniProtKB-UniRule"/>
</dbReference>
<dbReference type="GO" id="GO:0015293">
    <property type="term" value="F:symporter activity"/>
    <property type="evidence" value="ECO:0007669"/>
    <property type="project" value="UniProtKB-UniRule"/>
</dbReference>
<dbReference type="GO" id="GO:0034755">
    <property type="term" value="P:iron ion transmembrane transport"/>
    <property type="evidence" value="ECO:0007669"/>
    <property type="project" value="TreeGrafter"/>
</dbReference>
<dbReference type="HAMAP" id="MF_00221">
    <property type="entry name" value="NRAMP"/>
    <property type="match status" value="1"/>
</dbReference>
<dbReference type="InterPro" id="IPR001046">
    <property type="entry name" value="NRAMP_fam"/>
</dbReference>
<dbReference type="NCBIfam" id="TIGR01197">
    <property type="entry name" value="nramp"/>
    <property type="match status" value="1"/>
</dbReference>
<dbReference type="NCBIfam" id="NF037982">
    <property type="entry name" value="Nramp_1"/>
    <property type="match status" value="1"/>
</dbReference>
<dbReference type="NCBIfam" id="NF001923">
    <property type="entry name" value="PRK00701.1"/>
    <property type="match status" value="1"/>
</dbReference>
<dbReference type="PANTHER" id="PTHR11706:SF33">
    <property type="entry name" value="NATURAL RESISTANCE-ASSOCIATED MACROPHAGE PROTEIN 2"/>
    <property type="match status" value="1"/>
</dbReference>
<dbReference type="PANTHER" id="PTHR11706">
    <property type="entry name" value="SOLUTE CARRIER PROTEIN FAMILY 11 MEMBER"/>
    <property type="match status" value="1"/>
</dbReference>
<dbReference type="Pfam" id="PF01566">
    <property type="entry name" value="Nramp"/>
    <property type="match status" value="1"/>
</dbReference>
<dbReference type="PRINTS" id="PR00447">
    <property type="entry name" value="NATRESASSCMP"/>
</dbReference>
<name>MNTH_ECO27</name>
<feature type="chain" id="PRO_1000124863" description="Divalent metal cation transporter MntH">
    <location>
        <begin position="1"/>
        <end position="412"/>
    </location>
</feature>
<feature type="topological domain" description="Cytoplasmic" evidence="1">
    <location>
        <begin position="1"/>
        <end position="19"/>
    </location>
</feature>
<feature type="transmembrane region" description="Helical" evidence="1">
    <location>
        <begin position="20"/>
        <end position="39"/>
    </location>
</feature>
<feature type="topological domain" description="Periplasmic" evidence="1">
    <location>
        <begin position="40"/>
        <end position="51"/>
    </location>
</feature>
<feature type="transmembrane region" description="Helical" evidence="1">
    <location>
        <begin position="52"/>
        <end position="71"/>
    </location>
</feature>
<feature type="topological domain" description="Cytoplasmic" evidence="1">
    <location>
        <begin position="72"/>
        <end position="95"/>
    </location>
</feature>
<feature type="transmembrane region" description="Helical" evidence="1">
    <location>
        <begin position="96"/>
        <end position="118"/>
    </location>
</feature>
<feature type="topological domain" description="Periplasmic" evidence="1">
    <location>
        <begin position="119"/>
        <end position="125"/>
    </location>
</feature>
<feature type="transmembrane region" description="Helical" evidence="1">
    <location>
        <begin position="126"/>
        <end position="145"/>
    </location>
</feature>
<feature type="topological domain" description="Cytoplasmic" evidence="1">
    <location>
        <begin position="146"/>
        <end position="155"/>
    </location>
</feature>
<feature type="transmembrane region" description="Helical" evidence="1">
    <location>
        <begin position="156"/>
        <end position="175"/>
    </location>
</feature>
<feature type="topological domain" description="Periplasmic" evidence="1">
    <location>
        <begin position="176"/>
        <end position="196"/>
    </location>
</feature>
<feature type="transmembrane region" description="Helical" evidence="1">
    <location>
        <begin position="197"/>
        <end position="220"/>
    </location>
</feature>
<feature type="topological domain" description="Cytoplasmic" evidence="1">
    <location>
        <begin position="221"/>
        <end position="238"/>
    </location>
</feature>
<feature type="transmembrane region" description="Helical" evidence="1">
    <location>
        <begin position="239"/>
        <end position="258"/>
    </location>
</feature>
<feature type="topological domain" description="Periplasmic" evidence="1">
    <location>
        <begin position="259"/>
        <end position="276"/>
    </location>
</feature>
<feature type="transmembrane region" description="Helical" evidence="1">
    <location>
        <begin position="277"/>
        <end position="297"/>
    </location>
</feature>
<feature type="topological domain" description="Cytoplasmic" evidence="1">
    <location>
        <begin position="298"/>
        <end position="327"/>
    </location>
</feature>
<feature type="transmembrane region" description="Helical" evidence="1">
    <location>
        <begin position="328"/>
        <end position="344"/>
    </location>
</feature>
<feature type="topological domain" description="Periplasmic" evidence="1">
    <location>
        <begin position="345"/>
        <end position="350"/>
    </location>
</feature>
<feature type="transmembrane region" description="Helical" evidence="1">
    <location>
        <begin position="351"/>
        <end position="370"/>
    </location>
</feature>
<feature type="topological domain" description="Cytoplasmic" evidence="1">
    <location>
        <begin position="371"/>
        <end position="387"/>
    </location>
</feature>
<feature type="transmembrane region" description="Helical" evidence="1">
    <location>
        <begin position="388"/>
        <end position="406"/>
    </location>
</feature>
<feature type="topological domain" description="Periplasmic" evidence="1">
    <location>
        <begin position="407"/>
        <end position="412"/>
    </location>
</feature>
<gene>
    <name evidence="1" type="primary">mntH</name>
    <name type="ordered locus">E2348C_2584</name>
</gene>
<comment type="function">
    <text evidence="1">H(+)-stimulated, divalent metal cation uptake system.</text>
</comment>
<comment type="subcellular location">
    <subcellularLocation>
        <location evidence="1">Cell inner membrane</location>
        <topology evidence="1">Multi-pass membrane protein</topology>
    </subcellularLocation>
</comment>
<comment type="similarity">
    <text evidence="1">Belongs to the NRAMP family.</text>
</comment>